<organism>
    <name type="scientific">Haemophilus influenzae (strain ATCC 51907 / DSM 11121 / KW20 / Rd)</name>
    <dbReference type="NCBI Taxonomy" id="71421"/>
    <lineage>
        <taxon>Bacteria</taxon>
        <taxon>Pseudomonadati</taxon>
        <taxon>Pseudomonadota</taxon>
        <taxon>Gammaproteobacteria</taxon>
        <taxon>Pasteurellales</taxon>
        <taxon>Pasteurellaceae</taxon>
        <taxon>Haemophilus</taxon>
    </lineage>
</organism>
<keyword id="KW-0472">Membrane</keyword>
<keyword id="KW-1185">Reference proteome</keyword>
<keyword id="KW-0812">Transmembrane</keyword>
<keyword id="KW-1133">Transmembrane helix</keyword>
<feature type="chain" id="PRO_0000077993" description="Uncharacterized protein HI_1037.1">
    <location>
        <begin position="1"/>
        <end position="90"/>
    </location>
</feature>
<feature type="transmembrane region" description="Helical" evidence="1">
    <location>
        <begin position="46"/>
        <end position="62"/>
    </location>
</feature>
<proteinExistence type="predicted"/>
<comment type="subcellular location">
    <subcellularLocation>
        <location evidence="2">Membrane</location>
        <topology evidence="2">Single-pass membrane protein</topology>
    </subcellularLocation>
</comment>
<sequence length="90" mass="10780">MYLELHFQFLFRFFSLIPIPCTIPNFRYHTRLLISRNXVFMNKLKMALLVVFLVSLFACTTIHQPKETVKSRFLKNNRLNKISIINIYTT</sequence>
<gene>
    <name type="ordered locus">HI_1037.1</name>
</gene>
<name>Y103A_HAEIN</name>
<evidence type="ECO:0000255" key="1"/>
<evidence type="ECO:0000305" key="2"/>
<protein>
    <recommendedName>
        <fullName>Uncharacterized protein HI_1037.1</fullName>
    </recommendedName>
</protein>
<accession>O86232</accession>
<reference key="1">
    <citation type="journal article" date="1995" name="Science">
        <title>Whole-genome random sequencing and assembly of Haemophilus influenzae Rd.</title>
        <authorList>
            <person name="Fleischmann R.D."/>
            <person name="Adams M.D."/>
            <person name="White O."/>
            <person name="Clayton R.A."/>
            <person name="Kirkness E.F."/>
            <person name="Kerlavage A.R."/>
            <person name="Bult C.J."/>
            <person name="Tomb J.-F."/>
            <person name="Dougherty B.A."/>
            <person name="Merrick J.M."/>
            <person name="McKenney K."/>
            <person name="Sutton G.G."/>
            <person name="FitzHugh W."/>
            <person name="Fields C.A."/>
            <person name="Gocayne J.D."/>
            <person name="Scott J.D."/>
            <person name="Shirley R."/>
            <person name="Liu L.-I."/>
            <person name="Glodek A."/>
            <person name="Kelley J.M."/>
            <person name="Weidman J.F."/>
            <person name="Phillips C.A."/>
            <person name="Spriggs T."/>
            <person name="Hedblom E."/>
            <person name="Cotton M.D."/>
            <person name="Utterback T.R."/>
            <person name="Hanna M.C."/>
            <person name="Nguyen D.T."/>
            <person name="Saudek D.M."/>
            <person name="Brandon R.C."/>
            <person name="Fine L.D."/>
            <person name="Fritchman J.L."/>
            <person name="Fuhrmann J.L."/>
            <person name="Geoghagen N.S.M."/>
            <person name="Gnehm C.L."/>
            <person name="McDonald L.A."/>
            <person name="Small K.V."/>
            <person name="Fraser C.M."/>
            <person name="Smith H.O."/>
            <person name="Venter J.C."/>
        </authorList>
    </citation>
    <scope>NUCLEOTIDE SEQUENCE [LARGE SCALE GENOMIC DNA]</scope>
    <source>
        <strain>ATCC 51907 / DSM 11121 / KW20 / Rd</strain>
    </source>
</reference>
<reference key="2">
    <citation type="submission" date="1998-05" db="EMBL/GenBank/DDBJ databases">
        <authorList>
            <person name="White O."/>
            <person name="Clayton R.A."/>
            <person name="Kerlavage A.R."/>
            <person name="Fleischmann R.D."/>
            <person name="Peterson J."/>
            <person name="Hickey E."/>
            <person name="Dodson R."/>
            <person name="Gwinn M."/>
        </authorList>
    </citation>
    <scope>IDENTIFICATION</scope>
</reference>
<dbReference type="EMBL" id="L42023">
    <property type="protein sequence ID" value="AAC22701.1"/>
    <property type="molecule type" value="Genomic_DNA"/>
</dbReference>
<dbReference type="STRING" id="71421.HI_1037.1"/>
<dbReference type="EnsemblBacteria" id="AAC22701">
    <property type="protein sequence ID" value="AAC22701"/>
    <property type="gene ID" value="HI_1037.1"/>
</dbReference>
<dbReference type="KEGG" id="hin:HI_1037.1"/>
<dbReference type="HOGENOM" id="CLU_2436682_0_0_6"/>
<dbReference type="Proteomes" id="UP000000579">
    <property type="component" value="Chromosome"/>
</dbReference>
<dbReference type="GO" id="GO:0016020">
    <property type="term" value="C:membrane"/>
    <property type="evidence" value="ECO:0007669"/>
    <property type="project" value="UniProtKB-SubCell"/>
</dbReference>